<organism>
    <name type="scientific">Arabidopsis thaliana</name>
    <name type="common">Mouse-ear cress</name>
    <dbReference type="NCBI Taxonomy" id="3702"/>
    <lineage>
        <taxon>Eukaryota</taxon>
        <taxon>Viridiplantae</taxon>
        <taxon>Streptophyta</taxon>
        <taxon>Embryophyta</taxon>
        <taxon>Tracheophyta</taxon>
        <taxon>Spermatophyta</taxon>
        <taxon>Magnoliopsida</taxon>
        <taxon>eudicotyledons</taxon>
        <taxon>Gunneridae</taxon>
        <taxon>Pentapetalae</taxon>
        <taxon>rosids</taxon>
        <taxon>malvids</taxon>
        <taxon>Brassicales</taxon>
        <taxon>Brassicaceae</taxon>
        <taxon>Camelineae</taxon>
        <taxon>Arabidopsis</taxon>
    </lineage>
</organism>
<accession>Q94AM1</accession>
<accession>Q9LSL3</accession>
<feature type="transit peptide" description="Chloroplast and mitochondrion" evidence="1">
    <location>
        <begin position="1"/>
        <end position="82"/>
    </location>
</feature>
<feature type="chain" id="PRO_0000425138" description="Organellar oligopeptidase A, chloroplastic/mitochondrial">
    <location>
        <begin position="83"/>
        <end position="791"/>
    </location>
</feature>
<feature type="coiled-coil region" evidence="1">
    <location>
        <begin position="118"/>
        <end position="138"/>
    </location>
</feature>
<feature type="coiled-coil region" evidence="1">
    <location>
        <begin position="239"/>
        <end position="259"/>
    </location>
</feature>
<feature type="active site" evidence="2 4">
    <location>
        <position position="572"/>
    </location>
</feature>
<feature type="binding site" evidence="2">
    <location>
        <position position="571"/>
    </location>
    <ligand>
        <name>Zn(2+)</name>
        <dbReference type="ChEBI" id="CHEBI:29105"/>
        <note>catalytic</note>
    </ligand>
</feature>
<feature type="binding site" evidence="2">
    <location>
        <position position="575"/>
    </location>
    <ligand>
        <name>Zn(2+)</name>
        <dbReference type="ChEBI" id="CHEBI:29105"/>
        <note>catalytic</note>
    </ligand>
</feature>
<feature type="binding site" evidence="2">
    <location>
        <position position="601"/>
    </location>
    <ligand>
        <name>Zn(2+)</name>
        <dbReference type="ChEBI" id="CHEBI:29105"/>
        <note>catalytic</note>
    </ligand>
</feature>
<feature type="binding site">
    <location>
        <begin position="703"/>
        <end position="709"/>
    </location>
    <ligand>
        <name>substrate</name>
    </ligand>
</feature>
<feature type="mutagenesis site" description="No effect on catalytic activity." evidence="4">
    <original>A</original>
    <variation>W</variation>
    <location>
        <position position="226"/>
    </location>
</feature>
<feature type="mutagenesis site" description="No effect on catalytic activity." evidence="4">
    <original>T</original>
    <variation>W</variation>
    <location>
        <position position="431"/>
    </location>
</feature>
<feature type="mutagenesis site" description="Loss of catalytic activity." evidence="4">
    <original>E</original>
    <variation>Q</variation>
    <location>
        <position position="572"/>
    </location>
</feature>
<feature type="mutagenesis site" description="Loss of activity." evidence="4">
    <original>H</original>
    <variation>F</variation>
    <location>
        <position position="703"/>
    </location>
</feature>
<feature type="mutagenesis site" description="Loss of activity." evidence="4">
    <original>Y</original>
    <variation>F</variation>
    <location>
        <position position="709"/>
    </location>
</feature>
<feature type="helix" evidence="10">
    <location>
        <begin position="95"/>
        <end position="97"/>
    </location>
</feature>
<feature type="helix" evidence="10">
    <location>
        <begin position="99"/>
        <end position="101"/>
    </location>
</feature>
<feature type="turn" evidence="10">
    <location>
        <begin position="109"/>
        <end position="111"/>
    </location>
</feature>
<feature type="helix" evidence="10">
    <location>
        <begin position="114"/>
        <end position="116"/>
    </location>
</feature>
<feature type="helix" evidence="10">
    <location>
        <begin position="117"/>
        <end position="138"/>
    </location>
</feature>
<feature type="turn" evidence="10">
    <location>
        <begin position="143"/>
        <end position="146"/>
    </location>
</feature>
<feature type="helix" evidence="10">
    <location>
        <begin position="147"/>
        <end position="170"/>
    </location>
</feature>
<feature type="helix" evidence="10">
    <location>
        <begin position="174"/>
        <end position="195"/>
    </location>
</feature>
<feature type="helix" evidence="10">
    <location>
        <begin position="198"/>
        <end position="208"/>
    </location>
</feature>
<feature type="helix" evidence="10">
    <location>
        <begin position="213"/>
        <end position="215"/>
    </location>
</feature>
<feature type="helix" evidence="10">
    <location>
        <begin position="218"/>
        <end position="233"/>
    </location>
</feature>
<feature type="turn" evidence="10">
    <location>
        <begin position="234"/>
        <end position="237"/>
    </location>
</feature>
<feature type="helix" evidence="10">
    <location>
        <begin position="240"/>
        <end position="270"/>
    </location>
</feature>
<feature type="strand" evidence="10">
    <location>
        <begin position="273"/>
        <end position="275"/>
    </location>
</feature>
<feature type="helix" evidence="10">
    <location>
        <begin position="278"/>
        <end position="281"/>
    </location>
</feature>
<feature type="helix" evidence="10">
    <location>
        <begin position="286"/>
        <end position="298"/>
    </location>
</feature>
<feature type="strand" evidence="10">
    <location>
        <begin position="306"/>
        <end position="309"/>
    </location>
</feature>
<feature type="strand" evidence="10">
    <location>
        <begin position="311"/>
        <end position="313"/>
    </location>
</feature>
<feature type="helix" evidence="10">
    <location>
        <begin position="317"/>
        <end position="326"/>
    </location>
</feature>
<feature type="helix" evidence="10">
    <location>
        <begin position="330"/>
        <end position="341"/>
    </location>
</feature>
<feature type="turn" evidence="10">
    <location>
        <begin position="342"/>
        <end position="344"/>
    </location>
</feature>
<feature type="helix" evidence="10">
    <location>
        <begin position="347"/>
        <end position="349"/>
    </location>
</feature>
<feature type="helix" evidence="10">
    <location>
        <begin position="352"/>
        <end position="368"/>
    </location>
</feature>
<feature type="helix" evidence="10">
    <location>
        <begin position="374"/>
        <end position="379"/>
    </location>
</feature>
<feature type="helix" evidence="10">
    <location>
        <begin position="386"/>
        <end position="417"/>
    </location>
</feature>
<feature type="helix" evidence="10">
    <location>
        <begin position="421"/>
        <end position="424"/>
    </location>
</feature>
<feature type="turn" evidence="10">
    <location>
        <begin position="428"/>
        <end position="430"/>
    </location>
</feature>
<feature type="helix" evidence="10">
    <location>
        <begin position="431"/>
        <end position="443"/>
    </location>
</feature>
<feature type="helix" evidence="10">
    <location>
        <begin position="447"/>
        <end position="450"/>
    </location>
</feature>
<feature type="helix" evidence="10">
    <location>
        <begin position="451"/>
        <end position="453"/>
    </location>
</feature>
<feature type="helix" evidence="10">
    <location>
        <begin position="456"/>
        <end position="471"/>
    </location>
</feature>
<feature type="strand" evidence="10">
    <location>
        <begin position="474"/>
        <end position="477"/>
    </location>
</feature>
<feature type="strand" evidence="10">
    <location>
        <begin position="490"/>
        <end position="495"/>
    </location>
</feature>
<feature type="strand" evidence="10">
    <location>
        <begin position="501"/>
        <end position="510"/>
    </location>
</feature>
<feature type="turn" evidence="10">
    <location>
        <begin position="513"/>
        <end position="515"/>
    </location>
</feature>
<feature type="strand" evidence="10">
    <location>
        <begin position="521"/>
        <end position="526"/>
    </location>
</feature>
<feature type="strand" evidence="10">
    <location>
        <begin position="543"/>
        <end position="550"/>
    </location>
</feature>
<feature type="helix" evidence="10">
    <location>
        <begin position="563"/>
        <end position="580"/>
    </location>
</feature>
<feature type="helix" evidence="10">
    <location>
        <begin position="587"/>
        <end position="589"/>
    </location>
</feature>
<feature type="turn" evidence="10">
    <location>
        <begin position="591"/>
        <end position="594"/>
    </location>
</feature>
<feature type="helix" evidence="10">
    <location>
        <begin position="597"/>
        <end position="599"/>
    </location>
</feature>
<feature type="helix" evidence="10">
    <location>
        <begin position="602"/>
        <end position="608"/>
    </location>
</feature>
<feature type="helix" evidence="10">
    <location>
        <begin position="609"/>
        <end position="612"/>
    </location>
</feature>
<feature type="helix" evidence="10">
    <location>
        <begin position="614"/>
        <end position="620"/>
    </location>
</feature>
<feature type="turn" evidence="10">
    <location>
        <begin position="624"/>
        <end position="626"/>
    </location>
</feature>
<feature type="helix" evidence="10">
    <location>
        <begin position="632"/>
        <end position="640"/>
    </location>
</feature>
<feature type="turn" evidence="10">
    <location>
        <begin position="641"/>
        <end position="645"/>
    </location>
</feature>
<feature type="helix" evidence="10">
    <location>
        <begin position="646"/>
        <end position="663"/>
    </location>
</feature>
<feature type="turn" evidence="10">
    <location>
        <begin position="664"/>
        <end position="666"/>
    </location>
</feature>
<feature type="helix" evidence="10">
    <location>
        <begin position="675"/>
        <end position="686"/>
    </location>
</feature>
<feature type="helix" evidence="10">
    <location>
        <begin position="697"/>
        <end position="700"/>
    </location>
</feature>
<feature type="helix" evidence="10">
    <location>
        <begin position="702"/>
        <end position="705"/>
    </location>
</feature>
<feature type="turn" evidence="10">
    <location>
        <begin position="708"/>
        <end position="714"/>
    </location>
</feature>
<feature type="helix" evidence="10">
    <location>
        <begin position="715"/>
        <end position="733"/>
    </location>
</feature>
<feature type="helix" evidence="10">
    <location>
        <begin position="738"/>
        <end position="749"/>
    </location>
</feature>
<feature type="turn" evidence="10">
    <location>
        <begin position="750"/>
        <end position="754"/>
    </location>
</feature>
<feature type="helix" evidence="10">
    <location>
        <begin position="761"/>
        <end position="769"/>
    </location>
</feature>
<feature type="helix" evidence="10">
    <location>
        <begin position="776"/>
        <end position="781"/>
    </location>
</feature>
<dbReference type="EC" id="3.4.24.70" evidence="4"/>
<dbReference type="EMBL" id="AB026639">
    <property type="protein sequence ID" value="BAA98181.1"/>
    <property type="status" value="ALT_INIT"/>
    <property type="molecule type" value="Genomic_DNA"/>
</dbReference>
<dbReference type="EMBL" id="CP002688">
    <property type="protein sequence ID" value="AED98078.1"/>
    <property type="molecule type" value="Genomic_DNA"/>
</dbReference>
<dbReference type="EMBL" id="AY045936">
    <property type="protein sequence ID" value="AAK76610.1"/>
    <property type="molecule type" value="mRNA"/>
</dbReference>
<dbReference type="EMBL" id="AY142682">
    <property type="protein sequence ID" value="AAN13220.1"/>
    <property type="molecule type" value="mRNA"/>
</dbReference>
<dbReference type="RefSeq" id="NP_569013.1">
    <property type="nucleotide sequence ID" value="NM_125960.3"/>
</dbReference>
<dbReference type="PDB" id="4KA7">
    <property type="method" value="X-ray"/>
    <property type="resolution" value="1.80 A"/>
    <property type="chains" value="A=83-791"/>
</dbReference>
<dbReference type="PDB" id="4KA8">
    <property type="method" value="X-ray"/>
    <property type="resolution" value="1.90 A"/>
    <property type="chains" value="A=83-791"/>
</dbReference>
<dbReference type="PDBsum" id="4KA7"/>
<dbReference type="PDBsum" id="4KA8"/>
<dbReference type="SMR" id="Q94AM1"/>
<dbReference type="BioGRID" id="21930">
    <property type="interactions" value="31"/>
</dbReference>
<dbReference type="FunCoup" id="Q94AM1">
    <property type="interactions" value="2074"/>
</dbReference>
<dbReference type="STRING" id="3702.Q94AM1"/>
<dbReference type="MEROPS" id="M03.A01"/>
<dbReference type="iPTMnet" id="Q94AM1"/>
<dbReference type="PaxDb" id="3702-AT5G65620.1"/>
<dbReference type="ProteomicsDB" id="249360"/>
<dbReference type="EnsemblPlants" id="AT5G65620.1">
    <property type="protein sequence ID" value="AT5G65620.1"/>
    <property type="gene ID" value="AT5G65620"/>
</dbReference>
<dbReference type="GeneID" id="836688"/>
<dbReference type="Gramene" id="AT5G65620.1">
    <property type="protein sequence ID" value="AT5G65620.1"/>
    <property type="gene ID" value="AT5G65620"/>
</dbReference>
<dbReference type="KEGG" id="ath:AT5G65620"/>
<dbReference type="Araport" id="AT5G65620"/>
<dbReference type="TAIR" id="AT5G65620">
    <property type="gene designation" value="OOP"/>
</dbReference>
<dbReference type="eggNOG" id="KOG2089">
    <property type="taxonomic scope" value="Eukaryota"/>
</dbReference>
<dbReference type="HOGENOM" id="CLU_001805_4_1_1"/>
<dbReference type="InParanoid" id="Q94AM1"/>
<dbReference type="OMA" id="TEYFAFK"/>
<dbReference type="PhylomeDB" id="Q94AM1"/>
<dbReference type="BRENDA" id="3.4.24.70">
    <property type="organism ID" value="399"/>
</dbReference>
<dbReference type="EvolutionaryTrace" id="Q94AM1"/>
<dbReference type="PRO" id="PR:Q94AM1"/>
<dbReference type="Proteomes" id="UP000006548">
    <property type="component" value="Chromosome 5"/>
</dbReference>
<dbReference type="ExpressionAtlas" id="Q94AM1">
    <property type="expression patterns" value="baseline and differential"/>
</dbReference>
<dbReference type="GO" id="GO:0009507">
    <property type="term" value="C:chloroplast"/>
    <property type="evidence" value="ECO:0007005"/>
    <property type="project" value="TAIR"/>
</dbReference>
<dbReference type="GO" id="GO:0009570">
    <property type="term" value="C:chloroplast stroma"/>
    <property type="evidence" value="ECO:0007005"/>
    <property type="project" value="TAIR"/>
</dbReference>
<dbReference type="GO" id="GO:0005759">
    <property type="term" value="C:mitochondrial matrix"/>
    <property type="evidence" value="ECO:0007669"/>
    <property type="project" value="UniProtKB-SubCell"/>
</dbReference>
<dbReference type="GO" id="GO:0009536">
    <property type="term" value="C:plastid"/>
    <property type="evidence" value="ECO:0007005"/>
    <property type="project" value="TAIR"/>
</dbReference>
<dbReference type="GO" id="GO:0046872">
    <property type="term" value="F:metal ion binding"/>
    <property type="evidence" value="ECO:0007669"/>
    <property type="project" value="UniProtKB-KW"/>
</dbReference>
<dbReference type="GO" id="GO:0004222">
    <property type="term" value="F:metalloendopeptidase activity"/>
    <property type="evidence" value="ECO:0007669"/>
    <property type="project" value="UniProtKB-EC"/>
</dbReference>
<dbReference type="GO" id="GO:0006508">
    <property type="term" value="P:proteolysis"/>
    <property type="evidence" value="ECO:0007669"/>
    <property type="project" value="UniProtKB-KW"/>
</dbReference>
<dbReference type="CDD" id="cd06456">
    <property type="entry name" value="M3A_DCP"/>
    <property type="match status" value="1"/>
</dbReference>
<dbReference type="FunFam" id="3.40.390.10:FF:000009">
    <property type="entry name" value="Oligopeptidase A"/>
    <property type="match status" value="1"/>
</dbReference>
<dbReference type="FunFam" id="1.10.1370.40:FF:000005">
    <property type="entry name" value="Organellar oligopeptidase A, chloroplastic/mitochondrial"/>
    <property type="match status" value="1"/>
</dbReference>
<dbReference type="FunFam" id="1.10.1370.40:FF:000006">
    <property type="entry name" value="Organellar oligopeptidase A, chloroplastic/mitochondrial"/>
    <property type="match status" value="1"/>
</dbReference>
<dbReference type="FunFam" id="1.10.1370.40:FF:000009">
    <property type="entry name" value="Zincin-like metalloproteases family protein"/>
    <property type="match status" value="1"/>
</dbReference>
<dbReference type="Gene3D" id="1.10.1370.40">
    <property type="match status" value="3"/>
</dbReference>
<dbReference type="InterPro" id="IPR034005">
    <property type="entry name" value="M3A_DCP"/>
</dbReference>
<dbReference type="InterPro" id="IPR045666">
    <property type="entry name" value="OpdA_N"/>
</dbReference>
<dbReference type="InterPro" id="IPR045090">
    <property type="entry name" value="Pept_M3A_M3B"/>
</dbReference>
<dbReference type="InterPro" id="IPR001567">
    <property type="entry name" value="Pept_M3A_M3B_dom"/>
</dbReference>
<dbReference type="PANTHER" id="PTHR11804:SF83">
    <property type="entry name" value="LD37516P"/>
    <property type="match status" value="1"/>
</dbReference>
<dbReference type="PANTHER" id="PTHR11804">
    <property type="entry name" value="PROTEASE M3 THIMET OLIGOPEPTIDASE-RELATED"/>
    <property type="match status" value="1"/>
</dbReference>
<dbReference type="Pfam" id="PF01432">
    <property type="entry name" value="Peptidase_M3"/>
    <property type="match status" value="1"/>
</dbReference>
<dbReference type="Pfam" id="PF19310">
    <property type="entry name" value="TOP_N"/>
    <property type="match status" value="1"/>
</dbReference>
<dbReference type="SUPFAM" id="SSF55486">
    <property type="entry name" value="Metalloproteases ('zincins'), catalytic domain"/>
    <property type="match status" value="1"/>
</dbReference>
<dbReference type="PROSITE" id="PS00142">
    <property type="entry name" value="ZINC_PROTEASE"/>
    <property type="match status" value="1"/>
</dbReference>
<sequence length="791" mass="88757">MLMATPTSRASLNLLRRSPKPKYFSSSSCHFRPSTFRKSYPCPIWSSSFSFCLPPPRSTTSTSLSSSSFRPFSSPPSMSSAAAAAVESVVSDETLSSNPLLQDFDFPPFDSVDASHVRPGIRALLQHLEAELEELEKSVEPTWPKLVEPLEKIVDRLTVVWGMINHLKAVKDTPELRAAIEDVQPEKVKFQLRLGQSKPIYNAFKAIRESPDWSSLSEARQRLVEAQIKEAVLIGIALDDEKREEFNKIEQELEKLSHKFSENVLDATKKFEKLITDKKEIEGLPPSALGLFAQAAVSKGHENATAENGPWIITLDAPSYLPVMQHAKNRALREEVYRAYLSRASSGDLDNTAIIDQILKLRLEKAKLLGYNNYAEVSMAMKMATVEKAAELLEKLRSASWDAAVQDMEDLKSFAKNQGAAESDSMTHWDTTFWSERLRESKYDINEEELRPYFSLPKVMDGLFSLAKTLFGIDIEPADGLAPVWNNDVRFYRVKDSSGNPIAYFYFDPYSRPSEKRGGAWMDEVVSRSRVMAQKGSSVRLPVAHMVCNQTPPVGDKPSLMTFREVETVFHEFGHALQHMLTKQDEGLVAGIRNIEWDAVELPSQFMENWCYHRDTLMSIAKHYETGETLPEEVYKKLLAARTFRAGSFSLRQLKFASVDLELHTKYVPGGPESIYDVDQRVSVKTQVIPPLPEDRFLCSFSHIFAGGYAAGYYSYKWAEVLSADAFSAFEDAGLDDIKAVKETGQRFRNTILALGGGKAPLKVFVEFRGREPSPEPLLRHNGLLAASASA</sequence>
<evidence type="ECO:0000255" key="1"/>
<evidence type="ECO:0000255" key="2">
    <source>
        <dbReference type="PROSITE-ProRule" id="PRU10095"/>
    </source>
</evidence>
<evidence type="ECO:0000269" key="3">
    <source>
    </source>
</evidence>
<evidence type="ECO:0000269" key="4">
    <source>
    </source>
</evidence>
<evidence type="ECO:0000303" key="5">
    <source>
    </source>
</evidence>
<evidence type="ECO:0000303" key="6">
    <source>
    </source>
</evidence>
<evidence type="ECO:0000305" key="7"/>
<evidence type="ECO:0000312" key="8">
    <source>
        <dbReference type="Araport" id="AT5G65620"/>
    </source>
</evidence>
<evidence type="ECO:0000312" key="9">
    <source>
        <dbReference type="EMBL" id="BAA98181.1"/>
    </source>
</evidence>
<evidence type="ECO:0007829" key="10">
    <source>
        <dbReference type="PDB" id="4KA7"/>
    </source>
</evidence>
<protein>
    <recommendedName>
        <fullName evidence="6">Organellar oligopeptidase A, chloroplastic/mitochondrial</fullName>
        <shortName evidence="6">AtOOP</shortName>
        <ecNumber evidence="4">3.4.24.70</ecNumber>
    </recommendedName>
    <alternativeName>
        <fullName evidence="5">Thimet metalloendopeptidase 1</fullName>
    </alternativeName>
    <alternativeName>
        <fullName evidence="5">Zincin-like metalloproteases family protein 1</fullName>
    </alternativeName>
</protein>
<name>OOPDA_ARATH</name>
<keyword id="KW-0002">3D-structure</keyword>
<keyword id="KW-0150">Chloroplast</keyword>
<keyword id="KW-0175">Coiled coil</keyword>
<keyword id="KW-0378">Hydrolase</keyword>
<keyword id="KW-0479">Metal-binding</keyword>
<keyword id="KW-0482">Metalloprotease</keyword>
<keyword id="KW-0496">Mitochondrion</keyword>
<keyword id="KW-0934">Plastid</keyword>
<keyword id="KW-0645">Protease</keyword>
<keyword id="KW-1185">Reference proteome</keyword>
<keyword id="KW-0809">Transit peptide</keyword>
<keyword id="KW-0862">Zinc</keyword>
<comment type="function">
    <text evidence="3 4">Oligopeptidase degrading short peptides from 8 to 23 amino acid residues. Plays a role in the degradation of transit peptides and of peptides derived from other proteolytic events. Does not exhibit a strict cleavage pattern. Binds salicylic acid.</text>
</comment>
<comment type="catalytic activity">
    <reaction evidence="4">
        <text>Hydrolysis of oligopeptides, with broad specificity. Gly or Ala commonly occur as P1 or P1' residues, but more distant residues are also important, as is shown by the fact that Z-Gly-Pro-Gly-|-Gly-Pro-Ala is cleaved, but not Z-(Gly)(5).</text>
        <dbReference type="EC" id="3.4.24.70"/>
    </reaction>
</comment>
<comment type="cofactor">
    <cofactor evidence="7">
        <name>Zn(2+)</name>
        <dbReference type="ChEBI" id="CHEBI:29105"/>
    </cofactor>
    <text evidence="7">Binds 1 zinc ion.</text>
</comment>
<comment type="activity regulation">
    <text evidence="3">Inhibited by salicylic acid.</text>
</comment>
<comment type="subcellular location">
    <subcellularLocation>
        <location evidence="4">Mitochondrion matrix</location>
    </subcellularLocation>
    <subcellularLocation>
        <location evidence="3 4">Plastid</location>
        <location evidence="3 4">Chloroplast stroma</location>
    </subcellularLocation>
</comment>
<comment type="developmental stage">
    <text evidence="3">Down-regulated during senescence.</text>
</comment>
<comment type="induction">
    <text evidence="3">Not regulated by pathogen infection, elicitor treatment and flg22, a 22-amino acid sequence of the conserved N-terminal part of flagellin.</text>
</comment>
<comment type="disruption phenotype">
    <text evidence="3 4">No visible phenotype and no effect on germination; probably due to the presence of the presequence proteases PREP1 and PREP2.</text>
</comment>
<comment type="similarity">
    <text evidence="7">Belongs to the peptidase M3 family.</text>
</comment>
<comment type="sequence caution" evidence="7">
    <conflict type="erroneous initiation">
        <sequence resource="EMBL-CDS" id="BAA98181"/>
    </conflict>
    <text>Extended N-terminus.</text>
</comment>
<gene>
    <name evidence="6" type="primary">OOP</name>
    <name evidence="6" type="synonym">PRD1</name>
    <name evidence="5" type="synonym">TOP1</name>
    <name evidence="8" type="ordered locus">At5g65620</name>
    <name evidence="9" type="ORF">K21L13.14</name>
</gene>
<proteinExistence type="evidence at protein level"/>
<reference key="1">
    <citation type="submission" date="1999-04" db="EMBL/GenBank/DDBJ databases">
        <title>Structural analysis of Arabidopsis thaliana chromosome 5. XI.</title>
        <authorList>
            <person name="Kaneko T."/>
            <person name="Katoh T."/>
            <person name="Asamizu E."/>
            <person name="Sato S."/>
            <person name="Nakamura Y."/>
            <person name="Kotani H."/>
            <person name="Tabata S."/>
        </authorList>
    </citation>
    <scope>NUCLEOTIDE SEQUENCE [LARGE SCALE GENOMIC DNA]</scope>
    <source>
        <strain>cv. Columbia</strain>
    </source>
</reference>
<reference key="2">
    <citation type="journal article" date="2017" name="Plant J.">
        <title>Araport11: a complete reannotation of the Arabidopsis thaliana reference genome.</title>
        <authorList>
            <person name="Cheng C.Y."/>
            <person name="Krishnakumar V."/>
            <person name="Chan A.P."/>
            <person name="Thibaud-Nissen F."/>
            <person name="Schobel S."/>
            <person name="Town C.D."/>
        </authorList>
    </citation>
    <scope>GENOME REANNOTATION</scope>
    <source>
        <strain>cv. Columbia</strain>
    </source>
</reference>
<reference key="3">
    <citation type="journal article" date="2003" name="Science">
        <title>Empirical analysis of transcriptional activity in the Arabidopsis genome.</title>
        <authorList>
            <person name="Yamada K."/>
            <person name="Lim J."/>
            <person name="Dale J.M."/>
            <person name="Chen H."/>
            <person name="Shinn P."/>
            <person name="Palm C.J."/>
            <person name="Southwick A.M."/>
            <person name="Wu H.C."/>
            <person name="Kim C.J."/>
            <person name="Nguyen M."/>
            <person name="Pham P.K."/>
            <person name="Cheuk R.F."/>
            <person name="Karlin-Newmann G."/>
            <person name="Liu S.X."/>
            <person name="Lam B."/>
            <person name="Sakano H."/>
            <person name="Wu T."/>
            <person name="Yu G."/>
            <person name="Miranda M."/>
            <person name="Quach H.L."/>
            <person name="Tripp M."/>
            <person name="Chang C.H."/>
            <person name="Lee J.M."/>
            <person name="Toriumi M.J."/>
            <person name="Chan M.M."/>
            <person name="Tang C.C."/>
            <person name="Onodera C.S."/>
            <person name="Deng J.M."/>
            <person name="Akiyama K."/>
            <person name="Ansari Y."/>
            <person name="Arakawa T."/>
            <person name="Banh J."/>
            <person name="Banno F."/>
            <person name="Bowser L."/>
            <person name="Brooks S.Y."/>
            <person name="Carninci P."/>
            <person name="Chao Q."/>
            <person name="Choy N."/>
            <person name="Enju A."/>
            <person name="Goldsmith A.D."/>
            <person name="Gurjal M."/>
            <person name="Hansen N.F."/>
            <person name="Hayashizaki Y."/>
            <person name="Johnson-Hopson C."/>
            <person name="Hsuan V.W."/>
            <person name="Iida K."/>
            <person name="Karnes M."/>
            <person name="Khan S."/>
            <person name="Koesema E."/>
            <person name="Ishida J."/>
            <person name="Jiang P.X."/>
            <person name="Jones T."/>
            <person name="Kawai J."/>
            <person name="Kamiya A."/>
            <person name="Meyers C."/>
            <person name="Nakajima M."/>
            <person name="Narusaka M."/>
            <person name="Seki M."/>
            <person name="Sakurai T."/>
            <person name="Satou M."/>
            <person name="Tamse R."/>
            <person name="Vaysberg M."/>
            <person name="Wallender E.K."/>
            <person name="Wong C."/>
            <person name="Yamamura Y."/>
            <person name="Yuan S."/>
            <person name="Shinozaki K."/>
            <person name="Davis R.W."/>
            <person name="Theologis A."/>
            <person name="Ecker J.R."/>
        </authorList>
    </citation>
    <scope>NUCLEOTIDE SEQUENCE [LARGE SCALE MRNA]</scope>
    <source>
        <strain>cv. Columbia</strain>
    </source>
</reference>
<reference key="4">
    <citation type="journal article" date="2012" name="Physiol. Plantarum">
        <title>Proteolytic system of plant mitochondria.</title>
        <authorList>
            <person name="Kwasniak M."/>
            <person name="Pogorzelec L."/>
            <person name="Migdal I."/>
            <person name="Smakowska E."/>
            <person name="Janska H."/>
        </authorList>
    </citation>
    <scope>IDENTIFICATION</scope>
    <scope>REVIEW OF MITOCHONDRIAL PROTEOLYTIC SYSTEM</scope>
</reference>
<reference key="5">
    <citation type="journal article" date="2013" name="Plant J.">
        <title>The Arabidopsis oligopeptidases TOP1 and TOP2 are salicylic acid targets that modulate SA-mediated signaling and the immune response.</title>
        <authorList>
            <person name="Moreau M."/>
            <person name="Westlake T."/>
            <person name="Zampogna G."/>
            <person name="Popescu G."/>
            <person name="Tian M."/>
            <person name="Noutsos C."/>
            <person name="Popescu S."/>
        </authorList>
    </citation>
    <scope>FUNCTION</scope>
    <scope>SALICYLIC ACID-BINDING</scope>
    <scope>SUBCELLULAR LOCATION</scope>
    <scope>INDUCTION BY FLG22; PATHOGEN INFECTION AND ELICITOR</scope>
    <scope>DEVELOPMENTAL STAGE</scope>
    <scope>DISRUPTION PHENOTYPE</scope>
    <scope>ACTIVITY REGULATION</scope>
</reference>
<reference key="6">
    <citation type="journal article" date="2013" name="Proc. Natl. Acad. Sci. U.S.A.">
        <title>Organellar oligopeptidase (OOP) provides a complementary pathway for targeting peptide degradation in mitochondria and chloroplasts.</title>
        <authorList>
            <person name="Kmiec B."/>
            <person name="Teixeira P.F."/>
            <person name="Berntsson R.P."/>
            <person name="Murcha M.W."/>
            <person name="Branca R.M."/>
            <person name="Radomiljac J.D."/>
            <person name="Regberg J."/>
            <person name="Svensson L.M."/>
            <person name="Bakali A."/>
            <person name="Langel U."/>
            <person name="Lehtioe J."/>
            <person name="Whelan J."/>
            <person name="Stenmark P."/>
            <person name="Glaser E."/>
        </authorList>
    </citation>
    <scope>X-RAY CRYSTALLOGRAPHY (1.8 ANGSTROMS) OF 83-791 IN COMPLEX WITH SUBSTRATE</scope>
    <scope>ACTIVE SITE</scope>
    <scope>FUNCTION</scope>
    <scope>CATALYTIC ACTIVITY</scope>
    <scope>SUBCELLULAR LOCATION</scope>
    <scope>MUTAGENESIS OF ALA-226; THR-431; GLU-572; HIS-703 AND TYR-709</scope>
    <scope>DISRUPTION PHENOTYPE</scope>
</reference>